<comment type="function">
    <text evidence="1">One of the primary rRNA binding proteins, it binds directly to 16S rRNA central domain where it helps coordinate assembly of the platform of the 30S subunit.</text>
</comment>
<comment type="subunit">
    <text evidence="1">Part of the 30S ribosomal subunit. Contacts proteins S5 and S12.</text>
</comment>
<comment type="similarity">
    <text evidence="1">Belongs to the universal ribosomal protein uS8 family.</text>
</comment>
<proteinExistence type="inferred from homology"/>
<protein>
    <recommendedName>
        <fullName evidence="1">Small ribosomal subunit protein uS8</fullName>
    </recommendedName>
    <alternativeName>
        <fullName evidence="2">30S ribosomal protein S8</fullName>
    </alternativeName>
</protein>
<sequence>MSTHDPISDLITRIRNAQMRAKSKVSTPGSKMRANVLEVLKSEGYIRGYATLEHASGRSEIEIELKYFDGEPVIREIERVSKPGRRVYASVKNLPRVNNGLGISVLSTPKGIMADHEARDANVGGEVLFTVF</sequence>
<evidence type="ECO:0000255" key="1">
    <source>
        <dbReference type="HAMAP-Rule" id="MF_01302"/>
    </source>
</evidence>
<evidence type="ECO:0000305" key="2"/>
<gene>
    <name evidence="1" type="primary">rpsH</name>
    <name type="ordered locus">RPE_3572</name>
</gene>
<dbReference type="EMBL" id="CP000463">
    <property type="protein sequence ID" value="ABJ07502.1"/>
    <property type="molecule type" value="Genomic_DNA"/>
</dbReference>
<dbReference type="SMR" id="Q07KN2"/>
<dbReference type="STRING" id="316055.RPE_3572"/>
<dbReference type="KEGG" id="rpe:RPE_3572"/>
<dbReference type="eggNOG" id="COG0096">
    <property type="taxonomic scope" value="Bacteria"/>
</dbReference>
<dbReference type="HOGENOM" id="CLU_098428_0_0_5"/>
<dbReference type="OrthoDB" id="9802617at2"/>
<dbReference type="GO" id="GO:1990904">
    <property type="term" value="C:ribonucleoprotein complex"/>
    <property type="evidence" value="ECO:0007669"/>
    <property type="project" value="UniProtKB-KW"/>
</dbReference>
<dbReference type="GO" id="GO:0005840">
    <property type="term" value="C:ribosome"/>
    <property type="evidence" value="ECO:0007669"/>
    <property type="project" value="UniProtKB-KW"/>
</dbReference>
<dbReference type="GO" id="GO:0019843">
    <property type="term" value="F:rRNA binding"/>
    <property type="evidence" value="ECO:0007669"/>
    <property type="project" value="UniProtKB-UniRule"/>
</dbReference>
<dbReference type="GO" id="GO:0003735">
    <property type="term" value="F:structural constituent of ribosome"/>
    <property type="evidence" value="ECO:0007669"/>
    <property type="project" value="InterPro"/>
</dbReference>
<dbReference type="GO" id="GO:0006412">
    <property type="term" value="P:translation"/>
    <property type="evidence" value="ECO:0007669"/>
    <property type="project" value="UniProtKB-UniRule"/>
</dbReference>
<dbReference type="FunFam" id="3.30.1370.30:FF:000002">
    <property type="entry name" value="30S ribosomal protein S8"/>
    <property type="match status" value="1"/>
</dbReference>
<dbReference type="FunFam" id="3.30.1490.10:FF:000001">
    <property type="entry name" value="30S ribosomal protein S8"/>
    <property type="match status" value="1"/>
</dbReference>
<dbReference type="Gene3D" id="3.30.1370.30">
    <property type="match status" value="1"/>
</dbReference>
<dbReference type="Gene3D" id="3.30.1490.10">
    <property type="match status" value="1"/>
</dbReference>
<dbReference type="HAMAP" id="MF_01302_B">
    <property type="entry name" value="Ribosomal_uS8_B"/>
    <property type="match status" value="1"/>
</dbReference>
<dbReference type="InterPro" id="IPR000630">
    <property type="entry name" value="Ribosomal_uS8"/>
</dbReference>
<dbReference type="InterPro" id="IPR047863">
    <property type="entry name" value="Ribosomal_uS8_CS"/>
</dbReference>
<dbReference type="InterPro" id="IPR035987">
    <property type="entry name" value="Ribosomal_uS8_sf"/>
</dbReference>
<dbReference type="NCBIfam" id="NF001109">
    <property type="entry name" value="PRK00136.1"/>
    <property type="match status" value="1"/>
</dbReference>
<dbReference type="PANTHER" id="PTHR11758">
    <property type="entry name" value="40S RIBOSOMAL PROTEIN S15A"/>
    <property type="match status" value="1"/>
</dbReference>
<dbReference type="Pfam" id="PF00410">
    <property type="entry name" value="Ribosomal_S8"/>
    <property type="match status" value="1"/>
</dbReference>
<dbReference type="SUPFAM" id="SSF56047">
    <property type="entry name" value="Ribosomal protein S8"/>
    <property type="match status" value="1"/>
</dbReference>
<dbReference type="PROSITE" id="PS00053">
    <property type="entry name" value="RIBOSOMAL_S8"/>
    <property type="match status" value="1"/>
</dbReference>
<accession>Q07KN2</accession>
<reference key="1">
    <citation type="submission" date="2006-09" db="EMBL/GenBank/DDBJ databases">
        <title>Complete sequence of Rhodopseudomonas palustris BisA53.</title>
        <authorList>
            <consortium name="US DOE Joint Genome Institute"/>
            <person name="Copeland A."/>
            <person name="Lucas S."/>
            <person name="Lapidus A."/>
            <person name="Barry K."/>
            <person name="Detter J.C."/>
            <person name="Glavina del Rio T."/>
            <person name="Hammon N."/>
            <person name="Israni S."/>
            <person name="Dalin E."/>
            <person name="Tice H."/>
            <person name="Pitluck S."/>
            <person name="Chain P."/>
            <person name="Malfatti S."/>
            <person name="Shin M."/>
            <person name="Vergez L."/>
            <person name="Schmutz J."/>
            <person name="Larimer F."/>
            <person name="Land M."/>
            <person name="Hauser L."/>
            <person name="Pelletier D.A."/>
            <person name="Kyrpides N."/>
            <person name="Kim E."/>
            <person name="Harwood C.S."/>
            <person name="Oda Y."/>
            <person name="Richardson P."/>
        </authorList>
    </citation>
    <scope>NUCLEOTIDE SEQUENCE [LARGE SCALE GENOMIC DNA]</scope>
    <source>
        <strain>BisA53</strain>
    </source>
</reference>
<name>RS8_RHOP5</name>
<feature type="chain" id="PRO_0000290915" description="Small ribosomal subunit protein uS8">
    <location>
        <begin position="1"/>
        <end position="132"/>
    </location>
</feature>
<keyword id="KW-0687">Ribonucleoprotein</keyword>
<keyword id="KW-0689">Ribosomal protein</keyword>
<keyword id="KW-0694">RNA-binding</keyword>
<keyword id="KW-0699">rRNA-binding</keyword>
<organism>
    <name type="scientific">Rhodopseudomonas palustris (strain BisA53)</name>
    <dbReference type="NCBI Taxonomy" id="316055"/>
    <lineage>
        <taxon>Bacteria</taxon>
        <taxon>Pseudomonadati</taxon>
        <taxon>Pseudomonadota</taxon>
        <taxon>Alphaproteobacteria</taxon>
        <taxon>Hyphomicrobiales</taxon>
        <taxon>Nitrobacteraceae</taxon>
        <taxon>Rhodopseudomonas</taxon>
    </lineage>
</organism>